<keyword id="KW-0002">3D-structure</keyword>
<keyword id="KW-0067">ATP-binding</keyword>
<keyword id="KW-0963">Cytoplasm</keyword>
<keyword id="KW-0227">DNA damage</keyword>
<keyword id="KW-0228">DNA excision</keyword>
<keyword id="KW-0234">DNA repair</keyword>
<keyword id="KW-0267">Excision nuclease</keyword>
<keyword id="KW-0547">Nucleotide-binding</keyword>
<keyword id="KW-1185">Reference proteome</keyword>
<keyword id="KW-0742">SOS response</keyword>
<feature type="chain" id="PRO_0000138381" description="UvrABC system protein B">
    <location>
        <begin position="1"/>
        <end position="661"/>
    </location>
</feature>
<feature type="domain" description="Helicase ATP-binding" evidence="1">
    <location>
        <begin position="26"/>
        <end position="413"/>
    </location>
</feature>
<feature type="domain" description="Helicase C-terminal" evidence="1">
    <location>
        <begin position="430"/>
        <end position="596"/>
    </location>
</feature>
<feature type="domain" description="UVR" evidence="1">
    <location>
        <begin position="625"/>
        <end position="660"/>
    </location>
</feature>
<feature type="short sequence motif" description="Beta-hairpin">
    <location>
        <begin position="92"/>
        <end position="115"/>
    </location>
</feature>
<feature type="binding site" evidence="1">
    <location>
        <begin position="39"/>
        <end position="46"/>
    </location>
    <ligand>
        <name>ATP</name>
        <dbReference type="ChEBI" id="CHEBI:30616"/>
    </ligand>
</feature>
<feature type="sequence conflict" description="In Ref. 3; AAA22360." evidence="2" ref="3">
    <original>D</original>
    <variation>A</variation>
    <location>
        <position position="178"/>
    </location>
</feature>
<feature type="helix" evidence="3">
    <location>
        <begin position="17"/>
        <end position="29"/>
    </location>
</feature>
<feature type="strand" evidence="3">
    <location>
        <begin position="33"/>
        <end position="39"/>
    </location>
</feature>
<feature type="helix" evidence="3">
    <location>
        <begin position="45"/>
        <end position="56"/>
    </location>
</feature>
<feature type="strand" evidence="3">
    <location>
        <begin position="60"/>
        <end position="63"/>
    </location>
</feature>
<feature type="helix" evidence="3">
    <location>
        <begin position="67"/>
        <end position="80"/>
    </location>
</feature>
<feature type="strand" evidence="3">
    <location>
        <begin position="84"/>
        <end position="89"/>
    </location>
</feature>
<feature type="strand" evidence="3">
    <location>
        <begin position="93"/>
        <end position="97"/>
    </location>
</feature>
<feature type="strand" evidence="3">
    <location>
        <begin position="100"/>
        <end position="102"/>
    </location>
</feature>
<feature type="turn" evidence="3">
    <location>
        <begin position="103"/>
        <end position="106"/>
    </location>
</feature>
<feature type="strand" evidence="3">
    <location>
        <begin position="107"/>
        <end position="109"/>
    </location>
</feature>
<feature type="strand" evidence="3">
    <location>
        <begin position="112"/>
        <end position="115"/>
    </location>
</feature>
<feature type="helix" evidence="3">
    <location>
        <begin position="117"/>
        <end position="132"/>
    </location>
</feature>
<feature type="strand" evidence="3">
    <location>
        <begin position="136"/>
        <end position="140"/>
    </location>
</feature>
<feature type="helix" evidence="3">
    <location>
        <begin position="142"/>
        <end position="145"/>
    </location>
</feature>
<feature type="helix" evidence="3">
    <location>
        <begin position="151"/>
        <end position="157"/>
    </location>
</feature>
<feature type="strand" evidence="3">
    <location>
        <begin position="159"/>
        <end position="162"/>
    </location>
</feature>
<feature type="helix" evidence="3">
    <location>
        <begin position="169"/>
        <end position="178"/>
    </location>
</feature>
<feature type="strand" evidence="3">
    <location>
        <begin position="185"/>
        <end position="187"/>
    </location>
</feature>
<feature type="strand" evidence="3">
    <location>
        <begin position="192"/>
        <end position="196"/>
    </location>
</feature>
<feature type="strand" evidence="3">
    <location>
        <begin position="199"/>
        <end position="203"/>
    </location>
</feature>
<feature type="strand" evidence="3">
    <location>
        <begin position="208"/>
        <end position="228"/>
    </location>
</feature>
<feature type="turn" evidence="3">
    <location>
        <begin position="229"/>
        <end position="231"/>
    </location>
</feature>
<feature type="strand" evidence="3">
    <location>
        <begin position="234"/>
        <end position="237"/>
    </location>
</feature>
<feature type="strand" evidence="3">
    <location>
        <begin position="239"/>
        <end position="243"/>
    </location>
</feature>
<feature type="strand" evidence="3">
    <location>
        <begin position="246"/>
        <end position="249"/>
    </location>
</feature>
<feature type="helix" evidence="3">
    <location>
        <begin position="253"/>
        <end position="276"/>
    </location>
</feature>
<feature type="helix" evidence="3">
    <location>
        <begin position="280"/>
        <end position="300"/>
    </location>
</feature>
<feature type="helix" evidence="3">
    <location>
        <begin position="306"/>
        <end position="309"/>
    </location>
</feature>
<feature type="helix" evidence="3">
    <location>
        <begin position="310"/>
        <end position="313"/>
    </location>
</feature>
<feature type="helix" evidence="3">
    <location>
        <begin position="325"/>
        <end position="328"/>
    </location>
</feature>
<feature type="strand" evidence="3">
    <location>
        <begin position="334"/>
        <end position="338"/>
    </location>
</feature>
<feature type="helix" evidence="3">
    <location>
        <begin position="340"/>
        <end position="363"/>
    </location>
</feature>
<feature type="helix" evidence="3">
    <location>
        <begin position="369"/>
        <end position="373"/>
    </location>
</feature>
<feature type="helix" evidence="3">
    <location>
        <begin position="379"/>
        <end position="384"/>
    </location>
</feature>
<feature type="strand" evidence="3">
    <location>
        <begin position="387"/>
        <end position="392"/>
    </location>
</feature>
<feature type="helix" evidence="3">
    <location>
        <begin position="398"/>
        <end position="403"/>
    </location>
</feature>
<feature type="strand" evidence="3">
    <location>
        <begin position="408"/>
        <end position="410"/>
    </location>
</feature>
<feature type="strand" evidence="3">
    <location>
        <begin position="421"/>
        <end position="425"/>
    </location>
</feature>
<feature type="helix" evidence="3">
    <location>
        <begin position="430"/>
        <end position="442"/>
    </location>
</feature>
<feature type="turn" evidence="3">
    <location>
        <begin position="443"/>
        <end position="445"/>
    </location>
</feature>
<feature type="strand" evidence="3">
    <location>
        <begin position="447"/>
        <end position="451"/>
    </location>
</feature>
<feature type="helix" evidence="3">
    <location>
        <begin position="455"/>
        <end position="467"/>
    </location>
</feature>
<feature type="strand" evidence="3">
    <location>
        <begin position="472"/>
        <end position="475"/>
    </location>
</feature>
<feature type="helix" evidence="3">
    <location>
        <begin position="481"/>
        <end position="492"/>
    </location>
</feature>
<feature type="strand" evidence="3">
    <location>
        <begin position="497"/>
        <end position="502"/>
    </location>
</feature>
<feature type="strand" evidence="3">
    <location>
        <begin position="514"/>
        <end position="519"/>
    </location>
</feature>
<feature type="turn" evidence="3">
    <location>
        <begin position="520"/>
        <end position="523"/>
    </location>
</feature>
<feature type="turn" evidence="3">
    <location>
        <begin position="526"/>
        <end position="529"/>
    </location>
</feature>
<feature type="helix" evidence="3">
    <location>
        <begin position="531"/>
        <end position="539"/>
    </location>
</feature>
<feature type="turn" evidence="3">
    <location>
        <begin position="540"/>
        <end position="543"/>
    </location>
</feature>
<feature type="strand" evidence="3">
    <location>
        <begin position="548"/>
        <end position="552"/>
    </location>
</feature>
<feature type="helix" evidence="3">
    <location>
        <begin position="558"/>
        <end position="581"/>
    </location>
</feature>
<feature type="helix" evidence="3">
    <location>
        <begin position="622"/>
        <end position="640"/>
    </location>
</feature>
<feature type="helix" evidence="3">
    <location>
        <begin position="644"/>
        <end position="653"/>
    </location>
</feature>
<proteinExistence type="evidence at protein level"/>
<comment type="function">
    <text evidence="1">The UvrABC repair system catalyzes the recognition and processing of DNA lesions. A damage recognition complex composed of 2 UvrA and 2 UvrB subunits scans DNA for abnormalities. Upon binding of the UvrA(2)B(2) complex to a putative damaged site, the DNA wraps around one UvrB monomer. DNA wrap is dependent on ATP binding by UvrB and probably causes local melting of the DNA helix, facilitating insertion of UvrB beta-hairpin between the DNA strands. Then UvrB probes one DNA strand for the presence of a lesion. If a lesion is found the UvrA subunits dissociate and the UvrB-DNA preincision complex is formed. This complex is subsequently bound by UvrC and the second UvrB is released. If no lesion is found, the DNA wraps around the other UvrB subunit that will check the other stand for damage.</text>
</comment>
<comment type="subunit">
    <text evidence="1">Forms a heterotetramer with UvrA during the search for lesions. Interacts with UvrC in an incision complex.</text>
</comment>
<comment type="subcellular location">
    <subcellularLocation>
        <location evidence="1">Cytoplasm</location>
    </subcellularLocation>
</comment>
<comment type="domain">
    <text evidence="1">The beta-hairpin motif is involved in DNA binding.</text>
</comment>
<comment type="similarity">
    <text evidence="1">Belongs to the UvrB family.</text>
</comment>
<reference key="1">
    <citation type="submission" date="1997-11" db="EMBL/GenBank/DDBJ databases">
        <title>Nucleotide sequence of the 300-304 chromosomal segment of Bacillus subtilis.</title>
        <authorList>
            <person name="Lazarevic V."/>
            <person name="Soldo B."/>
            <person name="Rivolta C."/>
            <person name="Reynolds S."/>
            <person name="Mauel C."/>
            <person name="Karamata D."/>
        </authorList>
    </citation>
    <scope>NUCLEOTIDE SEQUENCE [GENOMIC DNA]</scope>
</reference>
<reference key="2">
    <citation type="journal article" date="1997" name="Nature">
        <title>The complete genome sequence of the Gram-positive bacterium Bacillus subtilis.</title>
        <authorList>
            <person name="Kunst F."/>
            <person name="Ogasawara N."/>
            <person name="Moszer I."/>
            <person name="Albertini A.M."/>
            <person name="Alloni G."/>
            <person name="Azevedo V."/>
            <person name="Bertero M.G."/>
            <person name="Bessieres P."/>
            <person name="Bolotin A."/>
            <person name="Borchert S."/>
            <person name="Borriss R."/>
            <person name="Boursier L."/>
            <person name="Brans A."/>
            <person name="Braun M."/>
            <person name="Brignell S.C."/>
            <person name="Bron S."/>
            <person name="Brouillet S."/>
            <person name="Bruschi C.V."/>
            <person name="Caldwell B."/>
            <person name="Capuano V."/>
            <person name="Carter N.M."/>
            <person name="Choi S.-K."/>
            <person name="Codani J.-J."/>
            <person name="Connerton I.F."/>
            <person name="Cummings N.J."/>
            <person name="Daniel R.A."/>
            <person name="Denizot F."/>
            <person name="Devine K.M."/>
            <person name="Duesterhoeft A."/>
            <person name="Ehrlich S.D."/>
            <person name="Emmerson P.T."/>
            <person name="Entian K.-D."/>
            <person name="Errington J."/>
            <person name="Fabret C."/>
            <person name="Ferrari E."/>
            <person name="Foulger D."/>
            <person name="Fritz C."/>
            <person name="Fujita M."/>
            <person name="Fujita Y."/>
            <person name="Fuma S."/>
            <person name="Galizzi A."/>
            <person name="Galleron N."/>
            <person name="Ghim S.-Y."/>
            <person name="Glaser P."/>
            <person name="Goffeau A."/>
            <person name="Golightly E.J."/>
            <person name="Grandi G."/>
            <person name="Guiseppi G."/>
            <person name="Guy B.J."/>
            <person name="Haga K."/>
            <person name="Haiech J."/>
            <person name="Harwood C.R."/>
            <person name="Henaut A."/>
            <person name="Hilbert H."/>
            <person name="Holsappel S."/>
            <person name="Hosono S."/>
            <person name="Hullo M.-F."/>
            <person name="Itaya M."/>
            <person name="Jones L.-M."/>
            <person name="Joris B."/>
            <person name="Karamata D."/>
            <person name="Kasahara Y."/>
            <person name="Klaerr-Blanchard M."/>
            <person name="Klein C."/>
            <person name="Kobayashi Y."/>
            <person name="Koetter P."/>
            <person name="Koningstein G."/>
            <person name="Krogh S."/>
            <person name="Kumano M."/>
            <person name="Kurita K."/>
            <person name="Lapidus A."/>
            <person name="Lardinois S."/>
            <person name="Lauber J."/>
            <person name="Lazarevic V."/>
            <person name="Lee S.-M."/>
            <person name="Levine A."/>
            <person name="Liu H."/>
            <person name="Masuda S."/>
            <person name="Mauel C."/>
            <person name="Medigue C."/>
            <person name="Medina N."/>
            <person name="Mellado R.P."/>
            <person name="Mizuno M."/>
            <person name="Moestl D."/>
            <person name="Nakai S."/>
            <person name="Noback M."/>
            <person name="Noone D."/>
            <person name="O'Reilly M."/>
            <person name="Ogawa K."/>
            <person name="Ogiwara A."/>
            <person name="Oudega B."/>
            <person name="Park S.-H."/>
            <person name="Parro V."/>
            <person name="Pohl T.M."/>
            <person name="Portetelle D."/>
            <person name="Porwollik S."/>
            <person name="Prescott A.M."/>
            <person name="Presecan E."/>
            <person name="Pujic P."/>
            <person name="Purnelle B."/>
            <person name="Rapoport G."/>
            <person name="Rey M."/>
            <person name="Reynolds S."/>
            <person name="Rieger M."/>
            <person name="Rivolta C."/>
            <person name="Rocha E."/>
            <person name="Roche B."/>
            <person name="Rose M."/>
            <person name="Sadaie Y."/>
            <person name="Sato T."/>
            <person name="Scanlan E."/>
            <person name="Schleich S."/>
            <person name="Schroeter R."/>
            <person name="Scoffone F."/>
            <person name="Sekiguchi J."/>
            <person name="Sekowska A."/>
            <person name="Seror S.J."/>
            <person name="Serror P."/>
            <person name="Shin B.-S."/>
            <person name="Soldo B."/>
            <person name="Sorokin A."/>
            <person name="Tacconi E."/>
            <person name="Takagi T."/>
            <person name="Takahashi H."/>
            <person name="Takemaru K."/>
            <person name="Takeuchi M."/>
            <person name="Tamakoshi A."/>
            <person name="Tanaka T."/>
            <person name="Terpstra P."/>
            <person name="Tognoni A."/>
            <person name="Tosato V."/>
            <person name="Uchiyama S."/>
            <person name="Vandenbol M."/>
            <person name="Vannier F."/>
            <person name="Vassarotti A."/>
            <person name="Viari A."/>
            <person name="Wambutt R."/>
            <person name="Wedler E."/>
            <person name="Wedler H."/>
            <person name="Weitzenegger T."/>
            <person name="Winters P."/>
            <person name="Wipat A."/>
            <person name="Yamamoto H."/>
            <person name="Yamane K."/>
            <person name="Yasumoto K."/>
            <person name="Yata K."/>
            <person name="Yoshida K."/>
            <person name="Yoshikawa H.-F."/>
            <person name="Zumstein E."/>
            <person name="Yoshikawa H."/>
            <person name="Danchin A."/>
        </authorList>
    </citation>
    <scope>NUCLEOTIDE SEQUENCE [LARGE SCALE GENOMIC DNA]</scope>
    <source>
        <strain>168</strain>
    </source>
</reference>
<reference key="3">
    <citation type="journal article" date="1991" name="J. Bacteriol.">
        <title>Genetic method to identify regulons controlled by nonessential elements: isolation of a gene dependent on alternate transcription factor sigma B of Bacillus subtilis.</title>
        <authorList>
            <person name="Boylan S.A."/>
            <person name="Thomas M.D."/>
            <person name="Price C.W."/>
        </authorList>
    </citation>
    <scope>NUCLEOTIDE SEQUENCE [GENOMIC DNA] OF 1-186</scope>
    <source>
        <strain>168 / Marburg / ATCC 6051 / DSM 10 / JCM 1465 / NBRC 13719 / NCIMB 3610 / NRRL NRS-744 / VKM B-501</strain>
    </source>
</reference>
<reference key="4">
    <citation type="journal article" date="1991" name="J. Bacteriol.">
        <title>Cloning and characterization of DNA damage-inducible promoter regions from Bacillus subtilis.</title>
        <authorList>
            <person name="Cheo D.L."/>
            <person name="Bayles K.W."/>
            <person name="Yasbin R.E."/>
        </authorList>
    </citation>
    <scope>NUCLEOTIDE SEQUENCE [GENOMIC DNA] OF 1-57</scope>
</reference>
<gene>
    <name evidence="1" type="primary">uvrB</name>
    <name type="synonym">dinA</name>
    <name type="synonym">uvr</name>
    <name type="ordered locus">BSU35170</name>
</gene>
<name>UVRB_BACSU</name>
<evidence type="ECO:0000255" key="1">
    <source>
        <dbReference type="HAMAP-Rule" id="MF_00204"/>
    </source>
</evidence>
<evidence type="ECO:0000305" key="2"/>
<evidence type="ECO:0007829" key="3">
    <source>
        <dbReference type="PDB" id="2D7D"/>
    </source>
</evidence>
<sequence>MKDRFELVSKYQPQGDQPKAIEKLVKGIQEGKKHQTLLGATGTGKTFTVSNLIKEVNKPTLVIAHNKTLAGQLYSEFKEFFPNNAVEYFVSYYDYYQPEAYVPQTDTFIEKDASINDEIDKLRHSATSALFERRDVIIIASVSCIYGLGSPEEYREMVVSLRTEMEIERNELLRKLVDIQYARNDIDFQRGTFRVRGDVVEIFPASRDEHCVRVEFFGDEIERIREVDALTGEILGDRDHVAIFPASHFVTRAEKMEKAIQNIEKELEEQLKVMHENGKLLEAQRLEQRTRYDLEMMREMGFCSGIENYSRHLTLRPPGSTPYTLLDYFPDDFMIVVDESHVTIPQVRGMFNGDQARKQVLVDHGFRLPSALDNRPLRFEEFEKHMHNIVYVSATPGPYEIEHTDEMVEQIIRPTGLLDPLIDVRPIEGQIDDLIGEIQARIERNERVLVTTLTKKMSEDLTDYLKEIGIKVNYLHSEIKTLERIEIIRDLRLGKYDVLVGINLLREGLDIPEVSLVAILDADKEGFLRSERSLIQTIGRAARNAEGRVIMYADKITKSMEIAINETKRRREQQERFNEEHGITPKTINKEIRDVIRATVAAEDKAEYKTKAAPKLSKMTKKERQKVVEQMEHEMKEAAKALDFERAAELRDLLLELKAEG</sequence>
<organism>
    <name type="scientific">Bacillus subtilis (strain 168)</name>
    <dbReference type="NCBI Taxonomy" id="224308"/>
    <lineage>
        <taxon>Bacteria</taxon>
        <taxon>Bacillati</taxon>
        <taxon>Bacillota</taxon>
        <taxon>Bacilli</taxon>
        <taxon>Bacillales</taxon>
        <taxon>Bacillaceae</taxon>
        <taxon>Bacillus</taxon>
    </lineage>
</organism>
<accession>P37954</accession>
<accession>O34455</accession>
<dbReference type="EMBL" id="AF017113">
    <property type="protein sequence ID" value="AAC67270.1"/>
    <property type="molecule type" value="Genomic_DNA"/>
</dbReference>
<dbReference type="EMBL" id="AL009126">
    <property type="protein sequence ID" value="CAB15534.1"/>
    <property type="molecule type" value="Genomic_DNA"/>
</dbReference>
<dbReference type="EMBL" id="M80473">
    <property type="protein sequence ID" value="AAA22360.1"/>
    <property type="molecule type" value="Genomic_DNA"/>
</dbReference>
<dbReference type="EMBL" id="M64048">
    <property type="protein sequence ID" value="AAA22389.1"/>
    <property type="molecule type" value="Genomic_DNA"/>
</dbReference>
<dbReference type="PIR" id="G69729">
    <property type="entry name" value="G69729"/>
</dbReference>
<dbReference type="RefSeq" id="NP_391397.1">
    <property type="nucleotide sequence ID" value="NC_000964.3"/>
</dbReference>
<dbReference type="RefSeq" id="WP_003243787.1">
    <property type="nucleotide sequence ID" value="NZ_OZ025638.1"/>
</dbReference>
<dbReference type="PDB" id="2D7D">
    <property type="method" value="X-ray"/>
    <property type="resolution" value="2.10 A"/>
    <property type="chains" value="A=1-661, B=622-661"/>
</dbReference>
<dbReference type="PDB" id="2NMV">
    <property type="method" value="X-ray"/>
    <property type="resolution" value="2.95 A"/>
    <property type="chains" value="A=1-661, B=622-659"/>
</dbReference>
<dbReference type="PDB" id="3V4R">
    <property type="method" value="X-ray"/>
    <property type="resolution" value="3.25 A"/>
    <property type="chains" value="A/B=1-661"/>
</dbReference>
<dbReference type="PDBsum" id="2D7D"/>
<dbReference type="PDBsum" id="2NMV"/>
<dbReference type="PDBsum" id="3V4R"/>
<dbReference type="SMR" id="P37954"/>
<dbReference type="FunCoup" id="P37954">
    <property type="interactions" value="395"/>
</dbReference>
<dbReference type="STRING" id="224308.BSU35170"/>
<dbReference type="PaxDb" id="224308-BSU35170"/>
<dbReference type="EnsemblBacteria" id="CAB15534">
    <property type="protein sequence ID" value="CAB15534"/>
    <property type="gene ID" value="BSU_35170"/>
</dbReference>
<dbReference type="GeneID" id="936663"/>
<dbReference type="KEGG" id="bsu:BSU35170"/>
<dbReference type="PATRIC" id="fig|224308.179.peg.3807"/>
<dbReference type="eggNOG" id="COG0556">
    <property type="taxonomic scope" value="Bacteria"/>
</dbReference>
<dbReference type="InParanoid" id="P37954"/>
<dbReference type="OrthoDB" id="9806651at2"/>
<dbReference type="PhylomeDB" id="P37954"/>
<dbReference type="BioCyc" id="BSUB:BSU35170-MONOMER"/>
<dbReference type="EvolutionaryTrace" id="P37954"/>
<dbReference type="Proteomes" id="UP000001570">
    <property type="component" value="Chromosome"/>
</dbReference>
<dbReference type="GO" id="GO:0005737">
    <property type="term" value="C:cytoplasm"/>
    <property type="evidence" value="ECO:0007669"/>
    <property type="project" value="UniProtKB-SubCell"/>
</dbReference>
<dbReference type="GO" id="GO:0009380">
    <property type="term" value="C:excinuclease repair complex"/>
    <property type="evidence" value="ECO:0000318"/>
    <property type="project" value="GO_Central"/>
</dbReference>
<dbReference type="GO" id="GO:0005524">
    <property type="term" value="F:ATP binding"/>
    <property type="evidence" value="ECO:0007669"/>
    <property type="project" value="UniProtKB-UniRule"/>
</dbReference>
<dbReference type="GO" id="GO:0016887">
    <property type="term" value="F:ATP hydrolysis activity"/>
    <property type="evidence" value="ECO:0007669"/>
    <property type="project" value="InterPro"/>
</dbReference>
<dbReference type="GO" id="GO:0003677">
    <property type="term" value="F:DNA binding"/>
    <property type="evidence" value="ECO:0007669"/>
    <property type="project" value="UniProtKB-UniRule"/>
</dbReference>
<dbReference type="GO" id="GO:0009381">
    <property type="term" value="F:excinuclease ABC activity"/>
    <property type="evidence" value="ECO:0007669"/>
    <property type="project" value="UniProtKB-UniRule"/>
</dbReference>
<dbReference type="GO" id="GO:0000715">
    <property type="term" value="P:nucleotide-excision repair, DNA damage recognition"/>
    <property type="evidence" value="ECO:0000318"/>
    <property type="project" value="GO_Central"/>
</dbReference>
<dbReference type="GO" id="GO:0009432">
    <property type="term" value="P:SOS response"/>
    <property type="evidence" value="ECO:0007669"/>
    <property type="project" value="UniProtKB-UniRule"/>
</dbReference>
<dbReference type="CDD" id="cd17916">
    <property type="entry name" value="DEXHc_UvrB"/>
    <property type="match status" value="1"/>
</dbReference>
<dbReference type="CDD" id="cd18790">
    <property type="entry name" value="SF2_C_UvrB"/>
    <property type="match status" value="1"/>
</dbReference>
<dbReference type="Gene3D" id="3.40.50.300">
    <property type="entry name" value="P-loop containing nucleotide triphosphate hydrolases"/>
    <property type="match status" value="3"/>
</dbReference>
<dbReference type="Gene3D" id="4.10.860.10">
    <property type="entry name" value="UVR domain"/>
    <property type="match status" value="1"/>
</dbReference>
<dbReference type="HAMAP" id="MF_00204">
    <property type="entry name" value="UvrB"/>
    <property type="match status" value="1"/>
</dbReference>
<dbReference type="InterPro" id="IPR006935">
    <property type="entry name" value="Helicase/UvrB_N"/>
</dbReference>
<dbReference type="InterPro" id="IPR014001">
    <property type="entry name" value="Helicase_ATP-bd"/>
</dbReference>
<dbReference type="InterPro" id="IPR001650">
    <property type="entry name" value="Helicase_C-like"/>
</dbReference>
<dbReference type="InterPro" id="IPR027417">
    <property type="entry name" value="P-loop_NTPase"/>
</dbReference>
<dbReference type="InterPro" id="IPR001943">
    <property type="entry name" value="UVR_dom"/>
</dbReference>
<dbReference type="InterPro" id="IPR036876">
    <property type="entry name" value="UVR_dom_sf"/>
</dbReference>
<dbReference type="InterPro" id="IPR004807">
    <property type="entry name" value="UvrB"/>
</dbReference>
<dbReference type="InterPro" id="IPR041471">
    <property type="entry name" value="UvrB_inter"/>
</dbReference>
<dbReference type="InterPro" id="IPR024759">
    <property type="entry name" value="UvrB_YAD/RRR_dom"/>
</dbReference>
<dbReference type="NCBIfam" id="NF003673">
    <property type="entry name" value="PRK05298.1"/>
    <property type="match status" value="1"/>
</dbReference>
<dbReference type="NCBIfam" id="TIGR00631">
    <property type="entry name" value="uvrb"/>
    <property type="match status" value="1"/>
</dbReference>
<dbReference type="PANTHER" id="PTHR24029">
    <property type="entry name" value="UVRABC SYSTEM PROTEIN B"/>
    <property type="match status" value="1"/>
</dbReference>
<dbReference type="PANTHER" id="PTHR24029:SF0">
    <property type="entry name" value="UVRABC SYSTEM PROTEIN B"/>
    <property type="match status" value="1"/>
</dbReference>
<dbReference type="Pfam" id="PF00271">
    <property type="entry name" value="Helicase_C"/>
    <property type="match status" value="1"/>
</dbReference>
<dbReference type="Pfam" id="PF04851">
    <property type="entry name" value="ResIII"/>
    <property type="match status" value="1"/>
</dbReference>
<dbReference type="Pfam" id="PF02151">
    <property type="entry name" value="UVR"/>
    <property type="match status" value="1"/>
</dbReference>
<dbReference type="Pfam" id="PF12344">
    <property type="entry name" value="UvrB"/>
    <property type="match status" value="1"/>
</dbReference>
<dbReference type="Pfam" id="PF17757">
    <property type="entry name" value="UvrB_inter"/>
    <property type="match status" value="1"/>
</dbReference>
<dbReference type="SMART" id="SM00487">
    <property type="entry name" value="DEXDc"/>
    <property type="match status" value="1"/>
</dbReference>
<dbReference type="SMART" id="SM00490">
    <property type="entry name" value="HELICc"/>
    <property type="match status" value="1"/>
</dbReference>
<dbReference type="SUPFAM" id="SSF46600">
    <property type="entry name" value="C-terminal UvrC-binding domain of UvrB"/>
    <property type="match status" value="1"/>
</dbReference>
<dbReference type="SUPFAM" id="SSF52540">
    <property type="entry name" value="P-loop containing nucleoside triphosphate hydrolases"/>
    <property type="match status" value="2"/>
</dbReference>
<dbReference type="PROSITE" id="PS51192">
    <property type="entry name" value="HELICASE_ATP_BIND_1"/>
    <property type="match status" value="1"/>
</dbReference>
<dbReference type="PROSITE" id="PS51194">
    <property type="entry name" value="HELICASE_CTER"/>
    <property type="match status" value="1"/>
</dbReference>
<dbReference type="PROSITE" id="PS50151">
    <property type="entry name" value="UVR"/>
    <property type="match status" value="1"/>
</dbReference>
<protein>
    <recommendedName>
        <fullName evidence="1">UvrABC system protein B</fullName>
        <shortName evidence="1">Protein UvrB</shortName>
    </recommendedName>
    <alternativeName>
        <fullName evidence="1">Excinuclease ABC subunit B</fullName>
    </alternativeName>
    <alternativeName>
        <fullName>Protein DinA</fullName>
    </alternativeName>
</protein>